<proteinExistence type="inferred from homology"/>
<accession>A6R9K6</accession>
<dbReference type="EMBL" id="CH476660">
    <property type="protein sequence ID" value="EDN09830.1"/>
    <property type="molecule type" value="Genomic_DNA"/>
</dbReference>
<dbReference type="SMR" id="A6R9K6"/>
<dbReference type="STRING" id="339724.A6R9K6"/>
<dbReference type="KEGG" id="aje:HCAG_06997"/>
<dbReference type="VEuPathDB" id="FungiDB:HCAG_06997"/>
<dbReference type="HOGENOM" id="CLU_023294_0_0_1"/>
<dbReference type="OMA" id="KHRFVRH"/>
<dbReference type="OrthoDB" id="9593at299071"/>
<dbReference type="Proteomes" id="UP000009297">
    <property type="component" value="Unassembled WGS sequence"/>
</dbReference>
<dbReference type="GO" id="GO:0005666">
    <property type="term" value="C:RNA polymerase III complex"/>
    <property type="evidence" value="ECO:0007669"/>
    <property type="project" value="InterPro"/>
</dbReference>
<dbReference type="GO" id="GO:0003697">
    <property type="term" value="F:single-stranded DNA binding"/>
    <property type="evidence" value="ECO:0007669"/>
    <property type="project" value="InterPro"/>
</dbReference>
<dbReference type="GO" id="GO:0006351">
    <property type="term" value="P:DNA-templated transcription"/>
    <property type="evidence" value="ECO:0007669"/>
    <property type="project" value="InterPro"/>
</dbReference>
<dbReference type="Gene3D" id="1.10.10.10">
    <property type="entry name" value="Winged helix-like DNA-binding domain superfamily/Winged helix DNA-binding domain"/>
    <property type="match status" value="2"/>
</dbReference>
<dbReference type="InterPro" id="IPR055207">
    <property type="entry name" value="POLR3C_WHD"/>
</dbReference>
<dbReference type="InterPro" id="IPR013197">
    <property type="entry name" value="RNA_pol_III_RPC82-rel_HTH"/>
</dbReference>
<dbReference type="InterPro" id="IPR008806">
    <property type="entry name" value="RNA_pol_III_Rpc82_C"/>
</dbReference>
<dbReference type="InterPro" id="IPR039748">
    <property type="entry name" value="RPC3"/>
</dbReference>
<dbReference type="InterPro" id="IPR036388">
    <property type="entry name" value="WH-like_DNA-bd_sf"/>
</dbReference>
<dbReference type="InterPro" id="IPR036390">
    <property type="entry name" value="WH_DNA-bd_sf"/>
</dbReference>
<dbReference type="PANTHER" id="PTHR12949:SF0">
    <property type="entry name" value="DNA-DIRECTED RNA POLYMERASE III SUBUNIT RPC3"/>
    <property type="match status" value="1"/>
</dbReference>
<dbReference type="PANTHER" id="PTHR12949">
    <property type="entry name" value="RNA POLYMERASE III DNA DIRECTED -RELATED"/>
    <property type="match status" value="1"/>
</dbReference>
<dbReference type="Pfam" id="PF08221">
    <property type="entry name" value="HTH_9"/>
    <property type="match status" value="1"/>
</dbReference>
<dbReference type="Pfam" id="PF22536">
    <property type="entry name" value="POLR3C_WHD"/>
    <property type="match status" value="1"/>
</dbReference>
<dbReference type="Pfam" id="PF05645">
    <property type="entry name" value="RNA_pol_Rpc82"/>
    <property type="match status" value="1"/>
</dbReference>
<dbReference type="SUPFAM" id="SSF46785">
    <property type="entry name" value="Winged helix' DNA-binding domain"/>
    <property type="match status" value="1"/>
</dbReference>
<organism>
    <name type="scientific">Ajellomyces capsulatus (strain NAm1 / WU24)</name>
    <name type="common">Darling's disease fungus</name>
    <name type="synonym">Histoplasma capsulatum</name>
    <dbReference type="NCBI Taxonomy" id="2059318"/>
    <lineage>
        <taxon>Eukaryota</taxon>
        <taxon>Fungi</taxon>
        <taxon>Dikarya</taxon>
        <taxon>Ascomycota</taxon>
        <taxon>Pezizomycotina</taxon>
        <taxon>Eurotiomycetes</taxon>
        <taxon>Eurotiomycetidae</taxon>
        <taxon>Onygenales</taxon>
        <taxon>Ajellomycetaceae</taxon>
        <taxon>Histoplasma</taxon>
    </lineage>
</organism>
<reference key="1">
    <citation type="journal article" date="2009" name="Genome Res.">
        <title>Comparative genomic analyses of the human fungal pathogens Coccidioides and their relatives.</title>
        <authorList>
            <person name="Sharpton T.J."/>
            <person name="Stajich J.E."/>
            <person name="Rounsley S.D."/>
            <person name="Gardner M.J."/>
            <person name="Wortman J.R."/>
            <person name="Jordar V.S."/>
            <person name="Maiti R."/>
            <person name="Kodira C.D."/>
            <person name="Neafsey D.E."/>
            <person name="Zeng Q."/>
            <person name="Hung C.-Y."/>
            <person name="McMahan C."/>
            <person name="Muszewska A."/>
            <person name="Grynberg M."/>
            <person name="Mandel M.A."/>
            <person name="Kellner E.M."/>
            <person name="Barker B.M."/>
            <person name="Galgiani J.N."/>
            <person name="Orbach M.J."/>
            <person name="Kirkland T.N."/>
            <person name="Cole G.T."/>
            <person name="Henn M.R."/>
            <person name="Birren B.W."/>
            <person name="Taylor J.W."/>
        </authorList>
    </citation>
    <scope>NUCLEOTIDE SEQUENCE [LARGE SCALE GENOMIC DNA]</scope>
    <source>
        <strain>NAm1 / WU24</strain>
    </source>
</reference>
<sequence length="649" mass="73570">MSQYAAELCKLLITDNFGELYAPLPRIVQNTRLSPRQVRHGLAVLIQQRLIYHYTSLDDGIAYYEASWMTAYNLVRSGRILQLVEEKLGKYVAKVLSTILYHGHVRISYLETLPELRPQVSSKAGKLVAANGLNGIHSDEEEEEEDAHVTDQGEQEEYASGRPENSVDSDYGKRSASQLHPALRSLAAYGYIMRVRDAHFQSPADLVEDAERAVSSRSDVRGLKGKKFQEAIDAGVETYIKEKTDGTIPQGPLAGALPRGIKRRAGQLATNSSSKRVKLEHLPEGDEDIDDDDFYGDDYVDGDNTLMDPNMIISVNYQKFEVALRNRRLARLAEQCTSRVTSQVYEALLGRIELKTPACRKQPERVPEGEENEQYSVAIPLHTILDDIDPDLDLSESMAGVDPANLLSNGHMGLNGDGNGDDDDDESTGASTGIWNRRRNRVYELEQHLSLLAQEPNIFSTRSMQSGMITWAVEFRHLARRLRHLEIERIIESRFGTIAVRVIRVLAAKGKLDEKRLQEISLMASKELRQVLARMEAAGFVDLQEVPRDAQRQPSRTMYLWFFDLDRVARMVLEDTYKCMSRCLQRIGVERNKLKLFLEKTERTDVKGNEEKYLSPAELKTLKEWRDKEALLLGEVGRLDELVSVLRDY</sequence>
<feature type="chain" id="PRO_0000351021" description="DNA-directed RNA polymerase III subunit rpc3">
    <location>
        <begin position="1"/>
        <end position="649"/>
    </location>
</feature>
<feature type="region of interest" description="Disordered" evidence="2">
    <location>
        <begin position="135"/>
        <end position="176"/>
    </location>
</feature>
<feature type="region of interest" description="Disordered" evidence="2">
    <location>
        <begin position="266"/>
        <end position="293"/>
    </location>
</feature>
<feature type="region of interest" description="Disordered" evidence="2">
    <location>
        <begin position="409"/>
        <end position="432"/>
    </location>
</feature>
<feature type="region of interest" description="Leucine-zipper">
    <location>
        <begin position="576"/>
        <end position="597"/>
    </location>
</feature>
<evidence type="ECO:0000250" key="1"/>
<evidence type="ECO:0000256" key="2">
    <source>
        <dbReference type="SAM" id="MobiDB-lite"/>
    </source>
</evidence>
<evidence type="ECO:0000305" key="3"/>
<comment type="function">
    <text evidence="1">DNA-dependent RNA polymerase catalyzes the transcription of DNA into RNA using the four ribonucleoside triphosphates as substrates. Specific core component of RNA polymerase III which synthesizes small RNAs, such as 5S rRNA and tRNAs (By similarity).</text>
</comment>
<comment type="subunit">
    <text evidence="1">Component of the RNA polymerase III (Pol III) complex consisting of 17 subunits.</text>
</comment>
<comment type="subcellular location">
    <subcellularLocation>
        <location evidence="1">Nucleus</location>
    </subcellularLocation>
</comment>
<comment type="similarity">
    <text evidence="3">Belongs to the RNA polymerase beta chain family.</text>
</comment>
<keyword id="KW-0240">DNA-directed RNA polymerase</keyword>
<keyword id="KW-0539">Nucleus</keyword>
<keyword id="KW-1185">Reference proteome</keyword>
<keyword id="KW-0804">Transcription</keyword>
<keyword id="KW-0862">Zinc</keyword>
<gene>
    <name type="primary">RPC82</name>
    <name type="synonym">RPC3</name>
    <name type="ORF">HCAG_06997</name>
</gene>
<protein>
    <recommendedName>
        <fullName>DNA-directed RNA polymerase III subunit rpc3</fullName>
        <shortName>RNA polymerase III subunit C3</shortName>
    </recommendedName>
</protein>
<name>RPC3_AJECN</name>